<accession>Q47GG0</accession>
<evidence type="ECO:0000255" key="1">
    <source>
        <dbReference type="HAMAP-Rule" id="MF_00022"/>
    </source>
</evidence>
<evidence type="ECO:0000256" key="2">
    <source>
        <dbReference type="SAM" id="MobiDB-lite"/>
    </source>
</evidence>
<gene>
    <name evidence="1" type="primary">gltX</name>
    <name type="ordered locus">Daro_1321</name>
</gene>
<organism>
    <name type="scientific">Dechloromonas aromatica (strain RCB)</name>
    <dbReference type="NCBI Taxonomy" id="159087"/>
    <lineage>
        <taxon>Bacteria</taxon>
        <taxon>Pseudomonadati</taxon>
        <taxon>Pseudomonadota</taxon>
        <taxon>Betaproteobacteria</taxon>
        <taxon>Rhodocyclales</taxon>
        <taxon>Azonexaceae</taxon>
        <taxon>Dechloromonas</taxon>
    </lineage>
</organism>
<reference key="1">
    <citation type="journal article" date="2009" name="BMC Genomics">
        <title>Metabolic analysis of the soil microbe Dechloromonas aromatica str. RCB: indications of a surprisingly complex life-style and cryptic anaerobic pathways for aromatic degradation.</title>
        <authorList>
            <person name="Salinero K.K."/>
            <person name="Keller K."/>
            <person name="Feil W.S."/>
            <person name="Feil H."/>
            <person name="Trong S."/>
            <person name="Di Bartolo G."/>
            <person name="Lapidus A."/>
        </authorList>
    </citation>
    <scope>NUCLEOTIDE SEQUENCE [LARGE SCALE GENOMIC DNA]</scope>
    <source>
        <strain>RCB</strain>
    </source>
</reference>
<proteinExistence type="inferred from homology"/>
<sequence>MKPVRTRFAPSPTGYLHIGGARTALFSWAYARRHGGDFILRIEDTDVARSTPEAVQAILDGMQWLGLEHDEGPFYQMQRMDRYKEVIQQMLANGSAYYCYTTREELDALRAEQEAKKEKPRYDGRWRPEAGKALPVPPTDVPPVIRFKNPQGGVVAWDDQVKGRIEFANTELDDLIIARADGTPTYNFCVCVDDWDMGITHVIRGDDHVNNTPRQINILKALGAEVPTYAHLSMILGDDGAKLSKRHGAVSVMQYDEEGFLTEAVINYLARLGWSHGDDEVFSRQQFVEWFDLDHITASAAQFNTEKLLWLNQHYMKQLPPAELAAKVQARLTARGVDTANGPDLEKAVVLYVDRSNTLNVLADAVEVFYAHVTPNPELLAQHLADDARPALAEFAAGIATVTWEAPAINALIKETVTKHGLKMPKLAMPLRVILTGQAQTPAVDAVIALIGRDKVAATLAAYL</sequence>
<feature type="chain" id="PRO_0000237356" description="Glutamate--tRNA ligase">
    <location>
        <begin position="1"/>
        <end position="464"/>
    </location>
</feature>
<feature type="region of interest" description="Disordered" evidence="2">
    <location>
        <begin position="113"/>
        <end position="142"/>
    </location>
</feature>
<feature type="short sequence motif" description="'HIGH' region" evidence="1">
    <location>
        <begin position="10"/>
        <end position="20"/>
    </location>
</feature>
<feature type="short sequence motif" description="'KMSKS' region" evidence="1">
    <location>
        <begin position="242"/>
        <end position="246"/>
    </location>
</feature>
<feature type="compositionally biased region" description="Basic and acidic residues" evidence="2">
    <location>
        <begin position="113"/>
        <end position="130"/>
    </location>
</feature>
<feature type="binding site" evidence="1">
    <location>
        <position position="245"/>
    </location>
    <ligand>
        <name>ATP</name>
        <dbReference type="ChEBI" id="CHEBI:30616"/>
    </ligand>
</feature>
<comment type="function">
    <text evidence="1">Catalyzes the attachment of glutamate to tRNA(Glu) in a two-step reaction: glutamate is first activated by ATP to form Glu-AMP and then transferred to the acceptor end of tRNA(Glu).</text>
</comment>
<comment type="catalytic activity">
    <reaction evidence="1">
        <text>tRNA(Glu) + L-glutamate + ATP = L-glutamyl-tRNA(Glu) + AMP + diphosphate</text>
        <dbReference type="Rhea" id="RHEA:23540"/>
        <dbReference type="Rhea" id="RHEA-COMP:9663"/>
        <dbReference type="Rhea" id="RHEA-COMP:9680"/>
        <dbReference type="ChEBI" id="CHEBI:29985"/>
        <dbReference type="ChEBI" id="CHEBI:30616"/>
        <dbReference type="ChEBI" id="CHEBI:33019"/>
        <dbReference type="ChEBI" id="CHEBI:78442"/>
        <dbReference type="ChEBI" id="CHEBI:78520"/>
        <dbReference type="ChEBI" id="CHEBI:456215"/>
        <dbReference type="EC" id="6.1.1.17"/>
    </reaction>
</comment>
<comment type="subunit">
    <text evidence="1">Monomer.</text>
</comment>
<comment type="subcellular location">
    <subcellularLocation>
        <location evidence="1">Cytoplasm</location>
    </subcellularLocation>
</comment>
<comment type="similarity">
    <text evidence="1">Belongs to the class-I aminoacyl-tRNA synthetase family. Glutamate--tRNA ligase type 1 subfamily.</text>
</comment>
<keyword id="KW-0030">Aminoacyl-tRNA synthetase</keyword>
<keyword id="KW-0067">ATP-binding</keyword>
<keyword id="KW-0963">Cytoplasm</keyword>
<keyword id="KW-0436">Ligase</keyword>
<keyword id="KW-0547">Nucleotide-binding</keyword>
<keyword id="KW-0648">Protein biosynthesis</keyword>
<name>SYE_DECAR</name>
<protein>
    <recommendedName>
        <fullName evidence="1">Glutamate--tRNA ligase</fullName>
        <ecNumber evidence="1">6.1.1.17</ecNumber>
    </recommendedName>
    <alternativeName>
        <fullName evidence="1">Glutamyl-tRNA synthetase</fullName>
        <shortName evidence="1">GluRS</shortName>
    </alternativeName>
</protein>
<dbReference type="EC" id="6.1.1.17" evidence="1"/>
<dbReference type="EMBL" id="CP000089">
    <property type="protein sequence ID" value="AAZ46071.1"/>
    <property type="molecule type" value="Genomic_DNA"/>
</dbReference>
<dbReference type="SMR" id="Q47GG0"/>
<dbReference type="STRING" id="159087.Daro_1321"/>
<dbReference type="KEGG" id="dar:Daro_1321"/>
<dbReference type="eggNOG" id="COG0008">
    <property type="taxonomic scope" value="Bacteria"/>
</dbReference>
<dbReference type="HOGENOM" id="CLU_015768_6_0_4"/>
<dbReference type="OrthoDB" id="9807503at2"/>
<dbReference type="GO" id="GO:0005829">
    <property type="term" value="C:cytosol"/>
    <property type="evidence" value="ECO:0007669"/>
    <property type="project" value="TreeGrafter"/>
</dbReference>
<dbReference type="GO" id="GO:0005524">
    <property type="term" value="F:ATP binding"/>
    <property type="evidence" value="ECO:0007669"/>
    <property type="project" value="UniProtKB-UniRule"/>
</dbReference>
<dbReference type="GO" id="GO:0004818">
    <property type="term" value="F:glutamate-tRNA ligase activity"/>
    <property type="evidence" value="ECO:0007669"/>
    <property type="project" value="UniProtKB-UniRule"/>
</dbReference>
<dbReference type="GO" id="GO:0000049">
    <property type="term" value="F:tRNA binding"/>
    <property type="evidence" value="ECO:0007669"/>
    <property type="project" value="InterPro"/>
</dbReference>
<dbReference type="GO" id="GO:0008270">
    <property type="term" value="F:zinc ion binding"/>
    <property type="evidence" value="ECO:0007669"/>
    <property type="project" value="InterPro"/>
</dbReference>
<dbReference type="GO" id="GO:0006424">
    <property type="term" value="P:glutamyl-tRNA aminoacylation"/>
    <property type="evidence" value="ECO:0007669"/>
    <property type="project" value="UniProtKB-UniRule"/>
</dbReference>
<dbReference type="CDD" id="cd00808">
    <property type="entry name" value="GluRS_core"/>
    <property type="match status" value="1"/>
</dbReference>
<dbReference type="FunFam" id="3.40.50.620:FF:000007">
    <property type="entry name" value="Glutamate--tRNA ligase"/>
    <property type="match status" value="1"/>
</dbReference>
<dbReference type="Gene3D" id="1.10.10.350">
    <property type="match status" value="1"/>
</dbReference>
<dbReference type="Gene3D" id="3.40.50.620">
    <property type="entry name" value="HUPs"/>
    <property type="match status" value="1"/>
</dbReference>
<dbReference type="HAMAP" id="MF_00022">
    <property type="entry name" value="Glu_tRNA_synth_type1"/>
    <property type="match status" value="1"/>
</dbReference>
<dbReference type="InterPro" id="IPR045462">
    <property type="entry name" value="aa-tRNA-synth_I_cd-bd"/>
</dbReference>
<dbReference type="InterPro" id="IPR020751">
    <property type="entry name" value="aa-tRNA-synth_I_codon-bd_sub2"/>
</dbReference>
<dbReference type="InterPro" id="IPR001412">
    <property type="entry name" value="aa-tRNA-synth_I_CS"/>
</dbReference>
<dbReference type="InterPro" id="IPR008925">
    <property type="entry name" value="aa_tRNA-synth_I_cd-bd_sf"/>
</dbReference>
<dbReference type="InterPro" id="IPR004527">
    <property type="entry name" value="Glu-tRNA-ligase_bac/mito"/>
</dbReference>
<dbReference type="InterPro" id="IPR000924">
    <property type="entry name" value="Glu/Gln-tRNA-synth"/>
</dbReference>
<dbReference type="InterPro" id="IPR020058">
    <property type="entry name" value="Glu/Gln-tRNA-synth_Ib_cat-dom"/>
</dbReference>
<dbReference type="InterPro" id="IPR049940">
    <property type="entry name" value="GluQ/Sye"/>
</dbReference>
<dbReference type="InterPro" id="IPR033910">
    <property type="entry name" value="GluRS_core"/>
</dbReference>
<dbReference type="InterPro" id="IPR014729">
    <property type="entry name" value="Rossmann-like_a/b/a_fold"/>
</dbReference>
<dbReference type="NCBIfam" id="TIGR00464">
    <property type="entry name" value="gltX_bact"/>
    <property type="match status" value="1"/>
</dbReference>
<dbReference type="PANTHER" id="PTHR43311">
    <property type="entry name" value="GLUTAMATE--TRNA LIGASE"/>
    <property type="match status" value="1"/>
</dbReference>
<dbReference type="PANTHER" id="PTHR43311:SF2">
    <property type="entry name" value="GLUTAMATE--TRNA LIGASE, MITOCHONDRIAL-RELATED"/>
    <property type="match status" value="1"/>
</dbReference>
<dbReference type="Pfam" id="PF19269">
    <property type="entry name" value="Anticodon_2"/>
    <property type="match status" value="1"/>
</dbReference>
<dbReference type="Pfam" id="PF00749">
    <property type="entry name" value="tRNA-synt_1c"/>
    <property type="match status" value="1"/>
</dbReference>
<dbReference type="PRINTS" id="PR00987">
    <property type="entry name" value="TRNASYNTHGLU"/>
</dbReference>
<dbReference type="SUPFAM" id="SSF48163">
    <property type="entry name" value="An anticodon-binding domain of class I aminoacyl-tRNA synthetases"/>
    <property type="match status" value="1"/>
</dbReference>
<dbReference type="SUPFAM" id="SSF52374">
    <property type="entry name" value="Nucleotidylyl transferase"/>
    <property type="match status" value="1"/>
</dbReference>
<dbReference type="PROSITE" id="PS00178">
    <property type="entry name" value="AA_TRNA_LIGASE_I"/>
    <property type="match status" value="1"/>
</dbReference>